<name>NCAP_MEASA</name>
<gene>
    <name type="primary">N</name>
    <name type="synonym">NP</name>
</gene>
<sequence>MATLLRSLALFKRNKDKPPITSGSGGAIRGIKHIIIVPIPGDSSITTRSRLLDRLVRLIGNPDVSGPKLTGALIGILSLFVESPGQLIQRITDDPDVSIRLLEVVQSDQSQSGLTFASRGTNMEDEADKYFSHDDPISSDQSRFGWFENKEISDIEVQDPEGFNMILGTILAQIWVLLAKAVTAPDTAADSELRRWIKYTQQRRVVGEFRLERKWLDVVRNRIAEDLSLRRFMVALILDIKRTPGNKPRIAEMICDIDTYIVEAGLASFILTIKFGIETMYPALGLHEFAGELSTLESLMNLYQQMGETAPYMVNLENSIQNKFSAGSYPLLWSYAMGVGVELENSMGGLNFGRSYFDPAYFRLGQEMVRRSAGKVSSTLASELGITAEDARLVSEIAMHTTEDKISRAVGPRQAQVSFLHGDQSENELPRLGGKEDRRVKQSRGEARESYRETGPSRASDARAAHLPTGTPLDIDTASESSQDPQDSRRSADALLRLQAMAGISEEQGSDTDTPIVYNDRNLLD</sequence>
<reference key="1">
    <citation type="journal article" date="1993" name="Virus Genes">
        <title>Molecular cloning and complete nucleotide sequence of genomic RNA of the AIK-C strain of attenuated measles virus.</title>
        <authorList>
            <person name="Mori T."/>
            <person name="Sasaki K."/>
            <person name="Hashimoto H."/>
            <person name="Makino S."/>
        </authorList>
    </citation>
    <scope>NUCLEOTIDE SEQUENCE [GENOMIC RNA]</scope>
</reference>
<reference key="2">
    <citation type="submission" date="2000-12" db="EMBL/GenBank/DDBJ databases">
        <title>The phosphoprotein of attenuated measles virus vaccine strain, AIK-C, contributes to its temperature-sensitive phenotype.</title>
        <authorList>
            <person name="Komase K."/>
            <person name="Suzuki N."/>
            <person name="Nakayama T."/>
            <person name="Miki K."/>
            <person name="Kawanishi R."/>
            <person name="Fukuda K."/>
        </authorList>
    </citation>
    <scope>NUCLEOTIDE SEQUENCE [GENOMIC RNA]</scope>
</reference>
<reference key="3">
    <citation type="journal article" date="2001" name="J. Virol.">
        <title>Comparison of predicted amino acid sequences of measles virus strains in the Edmonston vaccine lineage.</title>
        <authorList>
            <person name="Parks C.L."/>
            <person name="Lerch R.A."/>
            <person name="Walpita P."/>
            <person name="Wang H.P."/>
            <person name="Sidhu M.S."/>
            <person name="Udem S.A."/>
        </authorList>
    </citation>
    <scope>NUCLEOTIDE SEQUENCE [GENOMIC RNA]</scope>
</reference>
<proteinExistence type="inferred from homology"/>
<protein>
    <recommendedName>
        <fullName>Nucleoprotein</fullName>
    </recommendedName>
    <alternativeName>
        <fullName>Nucleocapsid protein</fullName>
        <shortName>NP</shortName>
        <shortName>Protein N</shortName>
    </alternativeName>
</protein>
<organismHost>
    <name type="scientific">Homo sapiens</name>
    <name type="common">Human</name>
    <dbReference type="NCBI Taxonomy" id="9606"/>
</organismHost>
<dbReference type="EMBL" id="S58435">
    <property type="protein sequence ID" value="AAB26141.1"/>
    <property type="molecule type" value="Genomic_RNA"/>
</dbReference>
<dbReference type="EMBL" id="AF266286">
    <property type="protein sequence ID" value="AAF85659.1"/>
    <property type="molecule type" value="Genomic_RNA"/>
</dbReference>
<dbReference type="EMBL" id="AB046218">
    <property type="protein sequence ID" value="BAB60861.1"/>
    <property type="molecule type" value="Genomic_RNA"/>
</dbReference>
<dbReference type="PIR" id="A48556">
    <property type="entry name" value="A48556"/>
</dbReference>
<dbReference type="SMR" id="P35972"/>
<dbReference type="CD-CODE" id="54D84D15">
    <property type="entry name" value="Viral factory"/>
</dbReference>
<dbReference type="Proteomes" id="UP000007775">
    <property type="component" value="Genome"/>
</dbReference>
<dbReference type="Proteomes" id="UP000138367">
    <property type="component" value="Genome"/>
</dbReference>
<dbReference type="Proteomes" id="UP000180757">
    <property type="component" value="Genome"/>
</dbReference>
<dbReference type="GO" id="GO:0019029">
    <property type="term" value="C:helical viral capsid"/>
    <property type="evidence" value="ECO:0007669"/>
    <property type="project" value="UniProtKB-KW"/>
</dbReference>
<dbReference type="GO" id="GO:0030430">
    <property type="term" value="C:host cell cytoplasm"/>
    <property type="evidence" value="ECO:0007669"/>
    <property type="project" value="UniProtKB-SubCell"/>
</dbReference>
<dbReference type="GO" id="GO:0042025">
    <property type="term" value="C:host cell nucleus"/>
    <property type="evidence" value="ECO:0007669"/>
    <property type="project" value="UniProtKB-SubCell"/>
</dbReference>
<dbReference type="GO" id="GO:1990904">
    <property type="term" value="C:ribonucleoprotein complex"/>
    <property type="evidence" value="ECO:0007669"/>
    <property type="project" value="UniProtKB-KW"/>
</dbReference>
<dbReference type="GO" id="GO:0019013">
    <property type="term" value="C:viral nucleocapsid"/>
    <property type="evidence" value="ECO:0007669"/>
    <property type="project" value="UniProtKB-KW"/>
</dbReference>
<dbReference type="GO" id="GO:0003723">
    <property type="term" value="F:RNA binding"/>
    <property type="evidence" value="ECO:0007669"/>
    <property type="project" value="UniProtKB-KW"/>
</dbReference>
<dbReference type="GO" id="GO:0005198">
    <property type="term" value="F:structural molecule activity"/>
    <property type="evidence" value="ECO:0007669"/>
    <property type="project" value="InterPro"/>
</dbReference>
<dbReference type="InterPro" id="IPR002021">
    <property type="entry name" value="Paramyx_ncap"/>
</dbReference>
<dbReference type="Pfam" id="PF00973">
    <property type="entry name" value="Paramyxo_ncap"/>
    <property type="match status" value="1"/>
</dbReference>
<feature type="chain" id="PRO_0000142653" description="Nucleoprotein">
    <location>
        <begin position="1"/>
        <end position="525"/>
    </location>
</feature>
<feature type="region of interest" description="Ncore" evidence="3">
    <location>
        <begin position="1"/>
        <end position="403"/>
    </location>
</feature>
<feature type="region of interest" description="RNA packaging and organization of the helical nucleocapsid" evidence="8">
    <location>
        <begin position="1"/>
        <end position="375"/>
    </location>
</feature>
<feature type="region of interest" description="Homomultimerization" evidence="5">
    <location>
        <begin position="1"/>
        <end position="36"/>
    </location>
</feature>
<feature type="region of interest" description="Homomultimerization" evidence="5">
    <location>
        <begin position="373"/>
        <end position="391"/>
    </location>
</feature>
<feature type="region of interest" description="Ntail" evidence="3">
    <location>
        <begin position="404"/>
        <end position="525"/>
    </location>
</feature>
<feature type="region of interest" description="Disordered" evidence="10">
    <location>
        <begin position="418"/>
        <end position="525"/>
    </location>
</feature>
<feature type="region of interest" description="Interaction with the phosphoprotein" evidence="7">
    <location>
        <begin position="477"/>
        <end position="505"/>
    </location>
</feature>
<feature type="short sequence motif" description="Nuclear localization signal" evidence="2">
    <location>
        <begin position="70"/>
        <end position="77"/>
    </location>
</feature>
<feature type="short sequence motif" description="Nuclear export signal" evidence="2">
    <location>
        <begin position="425"/>
        <end position="440"/>
    </location>
</feature>
<feature type="compositionally biased region" description="Basic and acidic residues" evidence="10">
    <location>
        <begin position="433"/>
        <end position="452"/>
    </location>
</feature>
<feature type="binding site" evidence="7">
    <location>
        <position position="180"/>
    </location>
    <ligand>
        <name>RNA</name>
        <dbReference type="ChEBI" id="CHEBI:33697"/>
    </ligand>
</feature>
<feature type="binding site" evidence="7">
    <location>
        <position position="195"/>
    </location>
    <ligand>
        <name>RNA</name>
        <dbReference type="ChEBI" id="CHEBI:33697"/>
    </ligand>
</feature>
<feature type="binding site" evidence="7">
    <location>
        <position position="202"/>
    </location>
    <ligand>
        <name>RNA</name>
        <dbReference type="ChEBI" id="CHEBI:33697"/>
    </ligand>
</feature>
<feature type="binding site" evidence="7">
    <location>
        <position position="260"/>
    </location>
    <ligand>
        <name>RNA</name>
        <dbReference type="ChEBI" id="CHEBI:33697"/>
    </ligand>
</feature>
<feature type="binding site" evidence="7">
    <location>
        <position position="351"/>
    </location>
    <ligand>
        <name>RNA</name>
        <dbReference type="ChEBI" id="CHEBI:33697"/>
    </ligand>
</feature>
<feature type="modified residue" description="Phosphothreonine; by host" evidence="9">
    <location>
        <position position="279"/>
    </location>
</feature>
<feature type="sequence variant">
    <original>N</original>
    <variation>I</variation>
    <location>
        <position position="315"/>
    </location>
</feature>
<evidence type="ECO:0000250" key="1">
    <source>
        <dbReference type="UniProtKB" id="O57286"/>
    </source>
</evidence>
<evidence type="ECO:0000250" key="2">
    <source>
        <dbReference type="UniProtKB" id="P04851"/>
    </source>
</evidence>
<evidence type="ECO:0000250" key="3">
    <source>
        <dbReference type="UniProtKB" id="P06159"/>
    </source>
</evidence>
<evidence type="ECO:0000250" key="4">
    <source>
        <dbReference type="UniProtKB" id="P0DXN6"/>
    </source>
</evidence>
<evidence type="ECO:0000250" key="5">
    <source>
        <dbReference type="UniProtKB" id="P10050"/>
    </source>
</evidence>
<evidence type="ECO:0000250" key="6">
    <source>
        <dbReference type="UniProtKB" id="Q07097"/>
    </source>
</evidence>
<evidence type="ECO:0000250" key="7">
    <source>
        <dbReference type="UniProtKB" id="Q77M43"/>
    </source>
</evidence>
<evidence type="ECO:0000250" key="8">
    <source>
        <dbReference type="UniProtKB" id="Q89933"/>
    </source>
</evidence>
<evidence type="ECO:0000250" key="9">
    <source>
        <dbReference type="UniProtKB" id="Q9WMB5"/>
    </source>
</evidence>
<evidence type="ECO:0000256" key="10">
    <source>
        <dbReference type="SAM" id="MobiDB-lite"/>
    </source>
</evidence>
<evidence type="ECO:0000305" key="11"/>
<keyword id="KW-0167">Capsid protein</keyword>
<keyword id="KW-1139">Helical capsid protein</keyword>
<keyword id="KW-1035">Host cytoplasm</keyword>
<keyword id="KW-1048">Host nucleus</keyword>
<keyword id="KW-0945">Host-virus interaction</keyword>
<keyword id="KW-0597">Phosphoprotein</keyword>
<keyword id="KW-0687">Ribonucleoprotein</keyword>
<keyword id="KW-0694">RNA-binding</keyword>
<keyword id="KW-0543">Viral nucleoprotein</keyword>
<keyword id="KW-0946">Virion</keyword>
<comment type="function">
    <text evidence="3 4 5 9">Forms the helical nucleocapsid (NC) in a ratio of 1 N per 6 ribonucleotides, protecting the genome from nucleases (By similarity). The nucleocapsid (NC) has a helical structure with either 12.35 or 11.64 N per turn, approximately 20 nm in diameter, with a hollow central cavity approximately 5 nm in diameter (By similarity). The encapsidated genomic RNA serves as template for transcription and replication; encapsidation by N is coupled to RNA synthesis (By similarity). Forms the encapsidation complex with the phosphoprotein protein P (By similarity). Before encapsidation, the newly synthesized free N protein, so-called N0, is chaperoned by P (By similarity). Participates, together with P, in the formation of viral factories (viroplasms), which are large inclusions in the host cytoplasm where replication takes place (By similarity). N is released in the blood following lysis of measles infected cells, it interacts then with human FCGR2B on immune cells, inducing apoptosis and blocking inflammatory immune response (By similarity).</text>
</comment>
<comment type="subunit">
    <text evidence="1 3 4 6 7 8 9">Homomultimer; forms the nucleocapsid (By similarity). Binds to viral genomic RNA (By similarity). N0 interacts (via Ncore) with the phosphoprotein (via N-terminus); this interaction allows P to chaperon N0 to avoid N polymerization and non-specific RNA binding before encapsidation (By similarity). Interacts (via the Ntail) as N-RNA template with the phosphoprotein (via C-terminus XD); this interaction maintains the P/L complex anchored to the nucleocapsid template during the sequential transcription (By similarity). Interacts with the phosphoprotein; this interaction leads to the formation of membraneless organelles that function as viral replication factories (By similarity). Interacts with human FCGR2B protein (By similarity). Interacts with human PPIA/CYPA and PPIB/CYPB (By similarity).</text>
</comment>
<comment type="subcellular location">
    <subcellularLocation>
        <location evidence="2">Virion</location>
    </subcellularLocation>
    <subcellularLocation>
        <location evidence="2">Host cytoplasm</location>
    </subcellularLocation>
    <subcellularLocation>
        <location evidence="2">Host nucleus</location>
    </subcellularLocation>
</comment>
<comment type="domain">
    <text evidence="8">Ncore is globular and carries regions required for N self-assembly and RNA-binding. Ntail is an intrinsically disordered monomeric domain in the C-terminus.</text>
</comment>
<comment type="PTM">
    <text evidence="9">Phosphorylation at Thr-279 is required for the formation of the nucleocapsid.</text>
</comment>
<comment type="similarity">
    <text evidence="11">Belongs to the paramyxoviruses nucleocapsid family.</text>
</comment>
<accession>P35972</accession>
<organism>
    <name type="scientific">Measles virus (strain Edmonston-AIK-C vaccine)</name>
    <name type="common">MeV</name>
    <name type="synonym">Subacute sclerose panencephalitis virus</name>
    <dbReference type="NCBI Taxonomy" id="36408"/>
    <lineage>
        <taxon>Viruses</taxon>
        <taxon>Riboviria</taxon>
        <taxon>Orthornavirae</taxon>
        <taxon>Negarnaviricota</taxon>
        <taxon>Haploviricotina</taxon>
        <taxon>Monjiviricetes</taxon>
        <taxon>Mononegavirales</taxon>
        <taxon>Paramyxoviridae</taxon>
        <taxon>Orthoparamyxovirinae</taxon>
        <taxon>Morbillivirus</taxon>
        <taxon>Morbillivirus hominis</taxon>
        <taxon>Measles morbillivirus</taxon>
    </lineage>
</organism>